<organism>
    <name type="scientific">Photorhabdus laumondii subsp. laumondii (strain DSM 15139 / CIP 105565 / TT01)</name>
    <name type="common">Photorhabdus luminescens subsp. laumondii</name>
    <dbReference type="NCBI Taxonomy" id="243265"/>
    <lineage>
        <taxon>Bacteria</taxon>
        <taxon>Pseudomonadati</taxon>
        <taxon>Pseudomonadota</taxon>
        <taxon>Gammaproteobacteria</taxon>
        <taxon>Enterobacterales</taxon>
        <taxon>Morganellaceae</taxon>
        <taxon>Photorhabdus</taxon>
    </lineage>
</organism>
<proteinExistence type="inferred from homology"/>
<protein>
    <recommendedName>
        <fullName evidence="1">Arginine exporter protein ArgO</fullName>
    </recommendedName>
</protein>
<accession>Q7N183</accession>
<reference key="1">
    <citation type="journal article" date="2003" name="Nat. Biotechnol.">
        <title>The genome sequence of the entomopathogenic bacterium Photorhabdus luminescens.</title>
        <authorList>
            <person name="Duchaud E."/>
            <person name="Rusniok C."/>
            <person name="Frangeul L."/>
            <person name="Buchrieser C."/>
            <person name="Givaudan A."/>
            <person name="Taourit S."/>
            <person name="Bocs S."/>
            <person name="Boursaux-Eude C."/>
            <person name="Chandler M."/>
            <person name="Charles J.-F."/>
            <person name="Dassa E."/>
            <person name="Derose R."/>
            <person name="Derzelle S."/>
            <person name="Freyssinet G."/>
            <person name="Gaudriault S."/>
            <person name="Medigue C."/>
            <person name="Lanois A."/>
            <person name="Powell K."/>
            <person name="Siguier P."/>
            <person name="Vincent R."/>
            <person name="Wingate V."/>
            <person name="Zouine M."/>
            <person name="Glaser P."/>
            <person name="Boemare N."/>
            <person name="Danchin A."/>
            <person name="Kunst F."/>
        </authorList>
    </citation>
    <scope>NUCLEOTIDE SEQUENCE [LARGE SCALE GENOMIC DNA]</scope>
    <source>
        <strain>DSM 15139 / CIP 105565 / TT01</strain>
    </source>
</reference>
<name>ARGO_PHOLL</name>
<dbReference type="EMBL" id="BX571871">
    <property type="protein sequence ID" value="CAE15985.1"/>
    <property type="molecule type" value="Genomic_DNA"/>
</dbReference>
<dbReference type="RefSeq" id="WP_011147779.1">
    <property type="nucleotide sequence ID" value="NC_005126.1"/>
</dbReference>
<dbReference type="STRING" id="243265.plu3612"/>
<dbReference type="GeneID" id="48849857"/>
<dbReference type="KEGG" id="plu:plu3612"/>
<dbReference type="eggNOG" id="COG1279">
    <property type="taxonomic scope" value="Bacteria"/>
</dbReference>
<dbReference type="HOGENOM" id="CLU_087840_0_1_6"/>
<dbReference type="OrthoDB" id="5638726at2"/>
<dbReference type="Proteomes" id="UP000002514">
    <property type="component" value="Chromosome"/>
</dbReference>
<dbReference type="GO" id="GO:0005886">
    <property type="term" value="C:plasma membrane"/>
    <property type="evidence" value="ECO:0007669"/>
    <property type="project" value="UniProtKB-SubCell"/>
</dbReference>
<dbReference type="GO" id="GO:0061459">
    <property type="term" value="F:L-arginine transmembrane transporter activity"/>
    <property type="evidence" value="ECO:0007669"/>
    <property type="project" value="UniProtKB-UniRule"/>
</dbReference>
<dbReference type="HAMAP" id="MF_01901">
    <property type="entry name" value="ArgO"/>
    <property type="match status" value="1"/>
</dbReference>
<dbReference type="InterPro" id="IPR023445">
    <property type="entry name" value="Arg_export_ArgO_enterobac"/>
</dbReference>
<dbReference type="InterPro" id="IPR001123">
    <property type="entry name" value="LeuE-type"/>
</dbReference>
<dbReference type="NCBIfam" id="NF006801">
    <property type="entry name" value="PRK09304.1"/>
    <property type="match status" value="1"/>
</dbReference>
<dbReference type="PANTHER" id="PTHR30086">
    <property type="entry name" value="ARGININE EXPORTER PROTEIN ARGO"/>
    <property type="match status" value="1"/>
</dbReference>
<dbReference type="PANTHER" id="PTHR30086:SF20">
    <property type="entry name" value="ARGININE EXPORTER PROTEIN ARGO-RELATED"/>
    <property type="match status" value="1"/>
</dbReference>
<dbReference type="Pfam" id="PF01810">
    <property type="entry name" value="LysE"/>
    <property type="match status" value="1"/>
</dbReference>
<evidence type="ECO:0000255" key="1">
    <source>
        <dbReference type="HAMAP-Rule" id="MF_01901"/>
    </source>
</evidence>
<feature type="chain" id="PRO_0000204162" description="Arginine exporter protein ArgO">
    <location>
        <begin position="1"/>
        <end position="207"/>
    </location>
</feature>
<feature type="transmembrane region" description="Helical" evidence="1">
    <location>
        <begin position="1"/>
        <end position="21"/>
    </location>
</feature>
<feature type="transmembrane region" description="Helical" evidence="1">
    <location>
        <begin position="42"/>
        <end position="62"/>
    </location>
</feature>
<feature type="transmembrane region" description="Helical" evidence="1">
    <location>
        <begin position="67"/>
        <end position="87"/>
    </location>
</feature>
<feature type="transmembrane region" description="Helical" evidence="1">
    <location>
        <begin position="111"/>
        <end position="131"/>
    </location>
</feature>
<feature type="transmembrane region" description="Helical" evidence="1">
    <location>
        <begin position="150"/>
        <end position="170"/>
    </location>
</feature>
<feature type="transmembrane region" description="Helical" evidence="1">
    <location>
        <begin position="185"/>
        <end position="205"/>
    </location>
</feature>
<sequence>MLSTFVQGFFLSAAMILPLGPQNAFVMQQGSRRQFHLMSATLCAISDGFLIGVGVFGGSALLSQSTLLLQFVTWGGVAFLFWYGWGALRVVLFANVELAQVNNSVKNRWRVVAIIFAVTWLNPHVYLDTIVVLGSIGGQLSSDLRPWFTFGAASASVSWFFSLSLLAAWFSPVLSKPLSQRIINGFICIIMWYIAWQLAKQGLLISD</sequence>
<gene>
    <name evidence="1" type="primary">argO</name>
    <name type="ordered locus">plu3612</name>
</gene>
<keyword id="KW-0029">Amino-acid transport</keyword>
<keyword id="KW-0997">Cell inner membrane</keyword>
<keyword id="KW-1003">Cell membrane</keyword>
<keyword id="KW-0472">Membrane</keyword>
<keyword id="KW-1185">Reference proteome</keyword>
<keyword id="KW-0812">Transmembrane</keyword>
<keyword id="KW-1133">Transmembrane helix</keyword>
<keyword id="KW-0813">Transport</keyword>
<comment type="function">
    <text evidence="1">Involved in the export of arginine. Important to control the intracellular level of arginine and the correct balance between arginine and lysine.</text>
</comment>
<comment type="catalytic activity">
    <reaction evidence="1">
        <text>L-arginine(in) = L-arginine(out)</text>
        <dbReference type="Rhea" id="RHEA:32143"/>
        <dbReference type="ChEBI" id="CHEBI:32682"/>
    </reaction>
    <physiologicalReaction direction="left-to-right" evidence="1">
        <dbReference type="Rhea" id="RHEA:32144"/>
    </physiologicalReaction>
</comment>
<comment type="subcellular location">
    <subcellularLocation>
        <location evidence="1">Cell inner membrane</location>
        <topology evidence="1">Multi-pass membrane protein</topology>
    </subcellularLocation>
</comment>
<comment type="similarity">
    <text evidence="1">Belongs to the LysE/ArgO transporter (TC 2.A.75) family.</text>
</comment>